<reference key="1">
    <citation type="journal article" date="2008" name="PLoS ONE">
        <title>Genome sequence of a lancefield group C Streptococcus zooepidemicus strain causing epidemic nephritis: new information about an old disease.</title>
        <authorList>
            <person name="Beres S.B."/>
            <person name="Sesso R."/>
            <person name="Pinto S.W.L."/>
            <person name="Hoe N.P."/>
            <person name="Porcella S.F."/>
            <person name="Deleo F.R."/>
            <person name="Musser J.M."/>
        </authorList>
    </citation>
    <scope>NUCLEOTIDE SEQUENCE [LARGE SCALE GENOMIC DNA]</scope>
    <source>
        <strain>MGCS10565</strain>
    </source>
</reference>
<sequence>MGRKWANIVAKKTAKDGATSKVYAKFGVEIYVAAKQGEPDPELNTALKFVIDRAKQAQVPKHVIDKAIDKAKGNTDETFVEGRYEGFGPNGSMIIVDTLTSNVNRTAANVRAAYGKNGGNMGAAGSVSYLFDKKGVIVFKGDDADSIFELLLEADVDVDDVEAEDGSITVYTAPTDLHKAILALRESGISEFQVTELEMIPQSEVTLEGDDLAVFEKLVDALEADDDVQKVYHNVADV</sequence>
<protein>
    <recommendedName>
        <fullName evidence="1">Probable transcriptional regulatory protein Sez_1681</fullName>
    </recommendedName>
</protein>
<proteinExistence type="inferred from homology"/>
<keyword id="KW-0963">Cytoplasm</keyword>
<keyword id="KW-0238">DNA-binding</keyword>
<keyword id="KW-0804">Transcription</keyword>
<keyword id="KW-0805">Transcription regulation</keyword>
<comment type="subcellular location">
    <subcellularLocation>
        <location evidence="1">Cytoplasm</location>
    </subcellularLocation>
</comment>
<comment type="similarity">
    <text evidence="1">Belongs to the TACO1 family. YeeN subfamily.</text>
</comment>
<name>Y1681_STREM</name>
<dbReference type="EMBL" id="CP001129">
    <property type="protein sequence ID" value="ACG63010.1"/>
    <property type="molecule type" value="Genomic_DNA"/>
</dbReference>
<dbReference type="RefSeq" id="WP_012516266.1">
    <property type="nucleotide sequence ID" value="NC_011134.1"/>
</dbReference>
<dbReference type="SMR" id="B4U4U3"/>
<dbReference type="KEGG" id="sez:Sez_1681"/>
<dbReference type="HOGENOM" id="CLU_062974_2_0_9"/>
<dbReference type="Proteomes" id="UP000001873">
    <property type="component" value="Chromosome"/>
</dbReference>
<dbReference type="GO" id="GO:0005829">
    <property type="term" value="C:cytosol"/>
    <property type="evidence" value="ECO:0007669"/>
    <property type="project" value="TreeGrafter"/>
</dbReference>
<dbReference type="GO" id="GO:0003677">
    <property type="term" value="F:DNA binding"/>
    <property type="evidence" value="ECO:0007669"/>
    <property type="project" value="UniProtKB-UniRule"/>
</dbReference>
<dbReference type="GO" id="GO:0006355">
    <property type="term" value="P:regulation of DNA-templated transcription"/>
    <property type="evidence" value="ECO:0007669"/>
    <property type="project" value="UniProtKB-UniRule"/>
</dbReference>
<dbReference type="FunFam" id="1.10.10.200:FF:000003">
    <property type="entry name" value="Probable transcriptional regulatory protein YeeN"/>
    <property type="match status" value="1"/>
</dbReference>
<dbReference type="FunFam" id="3.30.70.980:FF:000004">
    <property type="entry name" value="Probable transcriptional regulatory protein YeeN"/>
    <property type="match status" value="1"/>
</dbReference>
<dbReference type="Gene3D" id="1.10.10.200">
    <property type="match status" value="1"/>
</dbReference>
<dbReference type="Gene3D" id="3.30.70.980">
    <property type="match status" value="2"/>
</dbReference>
<dbReference type="HAMAP" id="MF_00693">
    <property type="entry name" value="Transcrip_reg_TACO1"/>
    <property type="match status" value="1"/>
</dbReference>
<dbReference type="HAMAP" id="MF_00918">
    <property type="entry name" value="Transcrip_reg_TACO1_YeeN"/>
    <property type="match status" value="1"/>
</dbReference>
<dbReference type="InterPro" id="IPR017856">
    <property type="entry name" value="Integrase-like_N"/>
</dbReference>
<dbReference type="InterPro" id="IPR048300">
    <property type="entry name" value="TACO1_YebC-like_2nd/3rd_dom"/>
</dbReference>
<dbReference type="InterPro" id="IPR049083">
    <property type="entry name" value="TACO1_YebC_N"/>
</dbReference>
<dbReference type="InterPro" id="IPR002876">
    <property type="entry name" value="Transcrip_reg_TACO1-like"/>
</dbReference>
<dbReference type="InterPro" id="IPR026564">
    <property type="entry name" value="Transcrip_reg_TACO1-like_dom3"/>
</dbReference>
<dbReference type="InterPro" id="IPR026562">
    <property type="entry name" value="Transcrip_reg_TACO1_YeeN"/>
</dbReference>
<dbReference type="InterPro" id="IPR029072">
    <property type="entry name" value="YebC-like"/>
</dbReference>
<dbReference type="NCBIfam" id="NF001030">
    <property type="entry name" value="PRK00110.1"/>
    <property type="match status" value="1"/>
</dbReference>
<dbReference type="NCBIfam" id="NF009044">
    <property type="entry name" value="PRK12378.1"/>
    <property type="match status" value="1"/>
</dbReference>
<dbReference type="NCBIfam" id="TIGR01033">
    <property type="entry name" value="YebC/PmpR family DNA-binding transcriptional regulator"/>
    <property type="match status" value="1"/>
</dbReference>
<dbReference type="PANTHER" id="PTHR12532">
    <property type="entry name" value="TRANSLATIONAL ACTIVATOR OF CYTOCHROME C OXIDASE 1"/>
    <property type="match status" value="1"/>
</dbReference>
<dbReference type="PANTHER" id="PTHR12532:SF0">
    <property type="entry name" value="TRANSLATIONAL ACTIVATOR OF CYTOCHROME C OXIDASE 1"/>
    <property type="match status" value="1"/>
</dbReference>
<dbReference type="Pfam" id="PF20772">
    <property type="entry name" value="TACO1_YebC_N"/>
    <property type="match status" value="1"/>
</dbReference>
<dbReference type="Pfam" id="PF01709">
    <property type="entry name" value="Transcrip_reg"/>
    <property type="match status" value="1"/>
</dbReference>
<dbReference type="SUPFAM" id="SSF75625">
    <property type="entry name" value="YebC-like"/>
    <property type="match status" value="1"/>
</dbReference>
<gene>
    <name type="ordered locus">Sez_1681</name>
</gene>
<evidence type="ECO:0000255" key="1">
    <source>
        <dbReference type="HAMAP-Rule" id="MF_00918"/>
    </source>
</evidence>
<accession>B4U4U3</accession>
<organism>
    <name type="scientific">Streptococcus equi subsp. zooepidemicus (strain MGCS10565)</name>
    <dbReference type="NCBI Taxonomy" id="552526"/>
    <lineage>
        <taxon>Bacteria</taxon>
        <taxon>Bacillati</taxon>
        <taxon>Bacillota</taxon>
        <taxon>Bacilli</taxon>
        <taxon>Lactobacillales</taxon>
        <taxon>Streptococcaceae</taxon>
        <taxon>Streptococcus</taxon>
    </lineage>
</organism>
<feature type="chain" id="PRO_1000132236" description="Probable transcriptional regulatory protein Sez_1681">
    <location>
        <begin position="1"/>
        <end position="238"/>
    </location>
</feature>